<feature type="chain" id="PRO_0000259409" description="Scaffold protein ILK">
    <location>
        <begin position="1"/>
        <end position="452"/>
    </location>
</feature>
<feature type="repeat" description="ANK 1" evidence="2">
    <location>
        <begin position="2"/>
        <end position="30"/>
    </location>
</feature>
<feature type="repeat" description="ANK 2" evidence="2">
    <location>
        <begin position="31"/>
        <end position="63"/>
    </location>
</feature>
<feature type="repeat" description="ANK 3" evidence="2">
    <location>
        <begin position="64"/>
        <end position="96"/>
    </location>
</feature>
<feature type="repeat" description="ANK 4" evidence="2">
    <location>
        <begin position="97"/>
        <end position="129"/>
    </location>
</feature>
<feature type="repeat" description="ANK 5" evidence="2">
    <location>
        <begin position="130"/>
        <end position="174"/>
    </location>
</feature>
<feature type="domain" description="Protein kinase" evidence="3">
    <location>
        <begin position="193"/>
        <end position="446"/>
    </location>
</feature>
<feature type="region of interest" description="Interaction with LIMS1" evidence="2">
    <location>
        <begin position="33"/>
        <end position="139"/>
    </location>
</feature>
<feature type="region of interest" description="PH-like; mediates interaction with TGFB1I1" evidence="1">
    <location>
        <begin position="180"/>
        <end position="212"/>
    </location>
</feature>
<feature type="short sequence motif" description="Nuclear localization signal" evidence="2">
    <location>
        <begin position="363"/>
        <end position="371"/>
    </location>
</feature>
<feature type="binding site" evidence="2">
    <location>
        <position position="200"/>
    </location>
    <ligand>
        <name>ATP</name>
        <dbReference type="ChEBI" id="CHEBI:30616"/>
    </ligand>
</feature>
<feature type="binding site" evidence="2">
    <location>
        <position position="202"/>
    </location>
    <ligand>
        <name>ATP</name>
        <dbReference type="ChEBI" id="CHEBI:30616"/>
    </ligand>
</feature>
<feature type="binding site" evidence="2">
    <location>
        <position position="203"/>
    </location>
    <ligand>
        <name>ATP</name>
        <dbReference type="ChEBI" id="CHEBI:30616"/>
    </ligand>
</feature>
<feature type="binding site" evidence="2">
    <location>
        <position position="204"/>
    </location>
    <ligand>
        <name>ATP</name>
        <dbReference type="ChEBI" id="CHEBI:30616"/>
    </ligand>
</feature>
<feature type="binding site" evidence="2">
    <location>
        <position position="270"/>
    </location>
    <ligand>
        <name>ATP</name>
        <dbReference type="ChEBI" id="CHEBI:30616"/>
    </ligand>
</feature>
<feature type="binding site" evidence="2">
    <location>
        <position position="272"/>
    </location>
    <ligand>
        <name>ATP</name>
        <dbReference type="ChEBI" id="CHEBI:30616"/>
    </ligand>
</feature>
<feature type="binding site" evidence="2">
    <location>
        <position position="279"/>
    </location>
    <ligand>
        <name>ATP</name>
        <dbReference type="ChEBI" id="CHEBI:30616"/>
    </ligand>
</feature>
<feature type="binding site" evidence="2">
    <location>
        <position position="339"/>
    </location>
    <ligand>
        <name>Mg(2+)</name>
        <dbReference type="ChEBI" id="CHEBI:18420"/>
    </ligand>
</feature>
<feature type="binding site" evidence="2">
    <location>
        <position position="341"/>
    </location>
    <ligand>
        <name>ATP</name>
        <dbReference type="ChEBI" id="CHEBI:30616"/>
    </ligand>
</feature>
<feature type="modified residue" description="N-acetylmethionine" evidence="2">
    <location>
        <position position="1"/>
    </location>
</feature>
<feature type="modified residue" description="Phosphothreonine" evidence="2">
    <location>
        <position position="173"/>
    </location>
</feature>
<feature type="modified residue" description="Phosphoserine" evidence="2">
    <location>
        <position position="186"/>
    </location>
</feature>
<feature type="modified residue" description="Phosphoserine" evidence="2">
    <location>
        <position position="246"/>
    </location>
</feature>
<feature type="modified residue" description="N6-acetyllysine" evidence="1">
    <location>
        <position position="426"/>
    </location>
</feature>
<dbReference type="EMBL" id="AF329194">
    <property type="protein sequence ID" value="AAK12419.1"/>
    <property type="molecule type" value="mRNA"/>
</dbReference>
<dbReference type="EMBL" id="BC062406">
    <property type="protein sequence ID" value="AAH62406.1"/>
    <property type="molecule type" value="mRNA"/>
</dbReference>
<dbReference type="RefSeq" id="NP_596900.1">
    <property type="nucleotide sequence ID" value="NM_133409.2"/>
</dbReference>
<dbReference type="RefSeq" id="XP_038941231.1">
    <property type="nucleotide sequence ID" value="XM_039085303.2"/>
</dbReference>
<dbReference type="SMR" id="Q99J82"/>
<dbReference type="BioGRID" id="251032">
    <property type="interactions" value="3"/>
</dbReference>
<dbReference type="FunCoup" id="Q99J82">
    <property type="interactions" value="2827"/>
</dbReference>
<dbReference type="IntAct" id="Q99J82">
    <property type="interactions" value="2"/>
</dbReference>
<dbReference type="STRING" id="10116.ENSRNOP00000025906"/>
<dbReference type="CarbonylDB" id="Q99J82"/>
<dbReference type="iPTMnet" id="Q99J82"/>
<dbReference type="PhosphoSitePlus" id="Q99J82"/>
<dbReference type="jPOST" id="Q99J82"/>
<dbReference type="PaxDb" id="10116-ENSRNOP00000025906"/>
<dbReference type="Ensembl" id="ENSRNOT00000025906.5">
    <property type="protein sequence ID" value="ENSRNOP00000025906.2"/>
    <property type="gene ID" value="ENSRNOG00000018993.5"/>
</dbReference>
<dbReference type="GeneID" id="170922"/>
<dbReference type="KEGG" id="rno:170922"/>
<dbReference type="UCSC" id="RGD:620063">
    <property type="organism name" value="rat"/>
</dbReference>
<dbReference type="AGR" id="RGD:620063"/>
<dbReference type="CTD" id="3611"/>
<dbReference type="RGD" id="620063">
    <property type="gene designation" value="Ilk"/>
</dbReference>
<dbReference type="eggNOG" id="KOG0195">
    <property type="taxonomic scope" value="Eukaryota"/>
</dbReference>
<dbReference type="GeneTree" id="ENSGT00940000155956"/>
<dbReference type="HOGENOM" id="CLU_000288_7_5_1"/>
<dbReference type="InParanoid" id="Q99J82"/>
<dbReference type="OrthoDB" id="916at9989"/>
<dbReference type="PhylomeDB" id="Q99J82"/>
<dbReference type="TreeFam" id="TF315194"/>
<dbReference type="Reactome" id="R-RNO-446343">
    <property type="pathway name" value="Localization of the PINCH-ILK-PARVIN complex to focal adhesions"/>
</dbReference>
<dbReference type="Reactome" id="R-RNO-446353">
    <property type="pathway name" value="Cell-extracellular matrix interactions"/>
</dbReference>
<dbReference type="PRO" id="PR:Q99J82"/>
<dbReference type="Proteomes" id="UP000002494">
    <property type="component" value="Chromosome 1"/>
</dbReference>
<dbReference type="Bgee" id="ENSRNOG00000018993">
    <property type="expression patterns" value="Expressed in lung and 20 other cell types or tissues"/>
</dbReference>
<dbReference type="GO" id="GO:0030424">
    <property type="term" value="C:axon"/>
    <property type="evidence" value="ECO:0000314"/>
    <property type="project" value="RGD"/>
</dbReference>
<dbReference type="GO" id="GO:0005938">
    <property type="term" value="C:cell cortex"/>
    <property type="evidence" value="ECO:0007669"/>
    <property type="project" value="UniProtKB-SubCell"/>
</dbReference>
<dbReference type="GO" id="GO:0005911">
    <property type="term" value="C:cell-cell junction"/>
    <property type="evidence" value="ECO:0000314"/>
    <property type="project" value="RGD"/>
</dbReference>
<dbReference type="GO" id="GO:0005813">
    <property type="term" value="C:centrosome"/>
    <property type="evidence" value="ECO:0000250"/>
    <property type="project" value="UniProtKB"/>
</dbReference>
<dbReference type="GO" id="GO:0000785">
    <property type="term" value="C:chromatin"/>
    <property type="evidence" value="ECO:0000250"/>
    <property type="project" value="UniProtKB"/>
</dbReference>
<dbReference type="GO" id="GO:0043034">
    <property type="term" value="C:costamere"/>
    <property type="evidence" value="ECO:0000314"/>
    <property type="project" value="RGD"/>
</dbReference>
<dbReference type="GO" id="GO:0005737">
    <property type="term" value="C:cytoplasm"/>
    <property type="evidence" value="ECO:0000266"/>
    <property type="project" value="RGD"/>
</dbReference>
<dbReference type="GO" id="GO:0043198">
    <property type="term" value="C:dendritic shaft"/>
    <property type="evidence" value="ECO:0000314"/>
    <property type="project" value="RGD"/>
</dbReference>
<dbReference type="GO" id="GO:0005925">
    <property type="term" value="C:focal adhesion"/>
    <property type="evidence" value="ECO:0000314"/>
    <property type="project" value="MGI"/>
</dbReference>
<dbReference type="GO" id="GO:0030027">
    <property type="term" value="C:lamellipodium"/>
    <property type="evidence" value="ECO:0000266"/>
    <property type="project" value="RGD"/>
</dbReference>
<dbReference type="GO" id="GO:0043025">
    <property type="term" value="C:neuronal cell body"/>
    <property type="evidence" value="ECO:0000314"/>
    <property type="project" value="RGD"/>
</dbReference>
<dbReference type="GO" id="GO:0005634">
    <property type="term" value="C:nucleus"/>
    <property type="evidence" value="ECO:0000250"/>
    <property type="project" value="UniProtKB"/>
</dbReference>
<dbReference type="GO" id="GO:0005886">
    <property type="term" value="C:plasma membrane"/>
    <property type="evidence" value="ECO:0007669"/>
    <property type="project" value="UniProtKB-SubCell"/>
</dbReference>
<dbReference type="GO" id="GO:0032991">
    <property type="term" value="C:protein-containing complex"/>
    <property type="evidence" value="ECO:0000314"/>
    <property type="project" value="RGD"/>
</dbReference>
<dbReference type="GO" id="GO:0030017">
    <property type="term" value="C:sarcomere"/>
    <property type="evidence" value="ECO:0007669"/>
    <property type="project" value="UniProtKB-SubCell"/>
</dbReference>
<dbReference type="GO" id="GO:0001725">
    <property type="term" value="C:stress fiber"/>
    <property type="evidence" value="ECO:0000314"/>
    <property type="project" value="RGD"/>
</dbReference>
<dbReference type="GO" id="GO:0043195">
    <property type="term" value="C:terminal bouton"/>
    <property type="evidence" value="ECO:0000314"/>
    <property type="project" value="RGD"/>
</dbReference>
<dbReference type="GO" id="GO:0005524">
    <property type="term" value="F:ATP binding"/>
    <property type="evidence" value="ECO:0000250"/>
    <property type="project" value="UniProtKB"/>
</dbReference>
<dbReference type="GO" id="GO:0005178">
    <property type="term" value="F:integrin binding"/>
    <property type="evidence" value="ECO:0000353"/>
    <property type="project" value="RGD"/>
</dbReference>
<dbReference type="GO" id="GO:0000287">
    <property type="term" value="F:magnesium ion binding"/>
    <property type="evidence" value="ECO:0000250"/>
    <property type="project" value="UniProtKB"/>
</dbReference>
<dbReference type="GO" id="GO:0019904">
    <property type="term" value="F:protein domain specific binding"/>
    <property type="evidence" value="ECO:0000314"/>
    <property type="project" value="RGD"/>
</dbReference>
<dbReference type="GO" id="GO:0004672">
    <property type="term" value="F:protein kinase activity"/>
    <property type="evidence" value="ECO:0000314"/>
    <property type="project" value="RGD"/>
</dbReference>
<dbReference type="GO" id="GO:0019901">
    <property type="term" value="F:protein kinase binding"/>
    <property type="evidence" value="ECO:0000266"/>
    <property type="project" value="RGD"/>
</dbReference>
<dbReference type="GO" id="GO:0044877">
    <property type="term" value="F:protein-containing complex binding"/>
    <property type="evidence" value="ECO:0000314"/>
    <property type="project" value="RGD"/>
</dbReference>
<dbReference type="GO" id="GO:0030674">
    <property type="term" value="F:protein-macromolecule adaptor activity"/>
    <property type="evidence" value="ECO:0000318"/>
    <property type="project" value="GO_Central"/>
</dbReference>
<dbReference type="GO" id="GO:0017124">
    <property type="term" value="F:SH3 domain binding"/>
    <property type="evidence" value="ECO:0000314"/>
    <property type="project" value="RGD"/>
</dbReference>
<dbReference type="GO" id="GO:0005102">
    <property type="term" value="F:signaling receptor binding"/>
    <property type="evidence" value="ECO:0000318"/>
    <property type="project" value="GO_Central"/>
</dbReference>
<dbReference type="GO" id="GO:0001658">
    <property type="term" value="P:branching involved in ureteric bud morphogenesis"/>
    <property type="evidence" value="ECO:0000266"/>
    <property type="project" value="RGD"/>
</dbReference>
<dbReference type="GO" id="GO:0070836">
    <property type="term" value="P:caveola assembly"/>
    <property type="evidence" value="ECO:0000250"/>
    <property type="project" value="UniProtKB"/>
</dbReference>
<dbReference type="GO" id="GO:0030154">
    <property type="term" value="P:cell differentiation"/>
    <property type="evidence" value="ECO:0000318"/>
    <property type="project" value="GO_Central"/>
</dbReference>
<dbReference type="GO" id="GO:0000902">
    <property type="term" value="P:cell morphogenesis"/>
    <property type="evidence" value="ECO:0000266"/>
    <property type="project" value="RGD"/>
</dbReference>
<dbReference type="GO" id="GO:0008283">
    <property type="term" value="P:cell population proliferation"/>
    <property type="evidence" value="ECO:0000266"/>
    <property type="project" value="RGD"/>
</dbReference>
<dbReference type="GO" id="GO:0030030">
    <property type="term" value="P:cell projection organization"/>
    <property type="evidence" value="ECO:0000266"/>
    <property type="project" value="RGD"/>
</dbReference>
<dbReference type="GO" id="GO:0007160">
    <property type="term" value="P:cell-matrix adhesion"/>
    <property type="evidence" value="ECO:0000318"/>
    <property type="project" value="GO_Central"/>
</dbReference>
<dbReference type="GO" id="GO:0045197">
    <property type="term" value="P:establishment or maintenance of epithelial cell apical/basal polarity"/>
    <property type="evidence" value="ECO:0000266"/>
    <property type="project" value="RGD"/>
</dbReference>
<dbReference type="GO" id="GO:0010761">
    <property type="term" value="P:fibroblast migration"/>
    <property type="evidence" value="ECO:0000266"/>
    <property type="project" value="RGD"/>
</dbReference>
<dbReference type="GO" id="GO:0007229">
    <property type="term" value="P:integrin-mediated signaling pathway"/>
    <property type="evidence" value="ECO:0000315"/>
    <property type="project" value="RGD"/>
</dbReference>
<dbReference type="GO" id="GO:0007052">
    <property type="term" value="P:mitotic spindle organization"/>
    <property type="evidence" value="ECO:0000250"/>
    <property type="project" value="UniProtKB"/>
</dbReference>
<dbReference type="GO" id="GO:0022011">
    <property type="term" value="P:myelination in peripheral nervous system"/>
    <property type="evidence" value="ECO:0000266"/>
    <property type="project" value="RGD"/>
</dbReference>
<dbReference type="GO" id="GO:0043066">
    <property type="term" value="P:negative regulation of apoptotic process"/>
    <property type="evidence" value="ECO:0000315"/>
    <property type="project" value="RGD"/>
</dbReference>
<dbReference type="GO" id="GO:0010667">
    <property type="term" value="P:negative regulation of cardiac muscle cell apoptotic process"/>
    <property type="evidence" value="ECO:0000315"/>
    <property type="project" value="RGD"/>
</dbReference>
<dbReference type="GO" id="GO:2000178">
    <property type="term" value="P:negative regulation of neural precursor cell proliferation"/>
    <property type="evidence" value="ECO:0000266"/>
    <property type="project" value="RGD"/>
</dbReference>
<dbReference type="GO" id="GO:0043524">
    <property type="term" value="P:negative regulation of neuron apoptotic process"/>
    <property type="evidence" value="ECO:0000315"/>
    <property type="project" value="RGD"/>
</dbReference>
<dbReference type="GO" id="GO:0014912">
    <property type="term" value="P:negative regulation of smooth muscle cell migration"/>
    <property type="evidence" value="ECO:0000315"/>
    <property type="project" value="RGD"/>
</dbReference>
<dbReference type="GO" id="GO:0048662">
    <property type="term" value="P:negative regulation of smooth muscle cell proliferation"/>
    <property type="evidence" value="ECO:0000315"/>
    <property type="project" value="RGD"/>
</dbReference>
<dbReference type="GO" id="GO:0021675">
    <property type="term" value="P:nerve development"/>
    <property type="evidence" value="ECO:0000266"/>
    <property type="project" value="RGD"/>
</dbReference>
<dbReference type="GO" id="GO:0061351">
    <property type="term" value="P:neural precursor cell proliferation"/>
    <property type="evidence" value="ECO:0000266"/>
    <property type="project" value="RGD"/>
</dbReference>
<dbReference type="GO" id="GO:0048812">
    <property type="term" value="P:neuron projection morphogenesis"/>
    <property type="evidence" value="ECO:0000315"/>
    <property type="project" value="RGD"/>
</dbReference>
<dbReference type="GO" id="GO:0003151">
    <property type="term" value="P:outflow tract morphogenesis"/>
    <property type="evidence" value="ECO:0000266"/>
    <property type="project" value="RGD"/>
</dbReference>
<dbReference type="GO" id="GO:0043491">
    <property type="term" value="P:phosphatidylinositol 3-kinase/protein kinase B signal transduction"/>
    <property type="evidence" value="ECO:0000266"/>
    <property type="project" value="RGD"/>
</dbReference>
<dbReference type="GO" id="GO:0045773">
    <property type="term" value="P:positive regulation of axon extension"/>
    <property type="evidence" value="ECO:0000315"/>
    <property type="project" value="RGD"/>
</dbReference>
<dbReference type="GO" id="GO:0050772">
    <property type="term" value="P:positive regulation of axonogenesis"/>
    <property type="evidence" value="ECO:0000315"/>
    <property type="project" value="RGD"/>
</dbReference>
<dbReference type="GO" id="GO:0030513">
    <property type="term" value="P:positive regulation of BMP signaling pathway"/>
    <property type="evidence" value="ECO:0000266"/>
    <property type="project" value="RGD"/>
</dbReference>
<dbReference type="GO" id="GO:0043123">
    <property type="term" value="P:positive regulation of canonical NF-kappaB signal transduction"/>
    <property type="evidence" value="ECO:0000266"/>
    <property type="project" value="RGD"/>
</dbReference>
<dbReference type="GO" id="GO:0090263">
    <property type="term" value="P:positive regulation of canonical Wnt signaling pathway"/>
    <property type="evidence" value="ECO:0000266"/>
    <property type="project" value="RGD"/>
</dbReference>
<dbReference type="GO" id="GO:0030335">
    <property type="term" value="P:positive regulation of cell migration"/>
    <property type="evidence" value="ECO:0000315"/>
    <property type="project" value="RGD"/>
</dbReference>
<dbReference type="GO" id="GO:0008284">
    <property type="term" value="P:positive regulation of cell population proliferation"/>
    <property type="evidence" value="ECO:0000315"/>
    <property type="project" value="RGD"/>
</dbReference>
<dbReference type="GO" id="GO:0001954">
    <property type="term" value="P:positive regulation of cell-matrix adhesion"/>
    <property type="evidence" value="ECO:0000315"/>
    <property type="project" value="RGD"/>
</dbReference>
<dbReference type="GO" id="GO:2000774">
    <property type="term" value="P:positive regulation of cellular senescence"/>
    <property type="evidence" value="ECO:0000315"/>
    <property type="project" value="RGD"/>
</dbReference>
<dbReference type="GO" id="GO:0050775">
    <property type="term" value="P:positive regulation of dendrite morphogenesis"/>
    <property type="evidence" value="ECO:0000315"/>
    <property type="project" value="RGD"/>
</dbReference>
<dbReference type="GO" id="GO:0045893">
    <property type="term" value="P:positive regulation of DNA-templated transcription"/>
    <property type="evidence" value="ECO:0000266"/>
    <property type="project" value="RGD"/>
</dbReference>
<dbReference type="GO" id="GO:0043410">
    <property type="term" value="P:positive regulation of MAPK cascade"/>
    <property type="evidence" value="ECO:0000315"/>
    <property type="project" value="RGD"/>
</dbReference>
<dbReference type="GO" id="GO:0045663">
    <property type="term" value="P:positive regulation of myoblast differentiation"/>
    <property type="evidence" value="ECO:0000315"/>
    <property type="project" value="RGD"/>
</dbReference>
<dbReference type="GO" id="GO:0045669">
    <property type="term" value="P:positive regulation of osteoblast differentiation"/>
    <property type="evidence" value="ECO:0000266"/>
    <property type="project" value="RGD"/>
</dbReference>
<dbReference type="GO" id="GO:0051897">
    <property type="term" value="P:positive regulation of phosphatidylinositol 3-kinase/protein kinase B signal transduction"/>
    <property type="evidence" value="ECO:0000315"/>
    <property type="project" value="RGD"/>
</dbReference>
<dbReference type="GO" id="GO:0009967">
    <property type="term" value="P:positive regulation of signal transduction"/>
    <property type="evidence" value="ECO:0000266"/>
    <property type="project" value="RGD"/>
</dbReference>
<dbReference type="GO" id="GO:1900026">
    <property type="term" value="P:positive regulation of substrate adhesion-dependent cell spreading"/>
    <property type="evidence" value="ECO:0000266"/>
    <property type="project" value="RGD"/>
</dbReference>
<dbReference type="GO" id="GO:0072697">
    <property type="term" value="P:protein localization to cell cortex"/>
    <property type="evidence" value="ECO:0000250"/>
    <property type="project" value="UniProtKB"/>
</dbReference>
<dbReference type="GO" id="GO:0032956">
    <property type="term" value="P:regulation of actin cytoskeleton organization"/>
    <property type="evidence" value="ECO:0000315"/>
    <property type="project" value="RGD"/>
</dbReference>
<dbReference type="GO" id="GO:0001558">
    <property type="term" value="P:regulation of cell growth"/>
    <property type="evidence" value="ECO:0000315"/>
    <property type="project" value="RGD"/>
</dbReference>
<dbReference type="GO" id="GO:0014044">
    <property type="term" value="P:Schwann cell development"/>
    <property type="evidence" value="ECO:0000266"/>
    <property type="project" value="RGD"/>
</dbReference>
<dbReference type="GO" id="GO:0034446">
    <property type="term" value="P:substrate adhesion-dependent cell spreading"/>
    <property type="evidence" value="ECO:0000315"/>
    <property type="project" value="RGD"/>
</dbReference>
<dbReference type="GO" id="GO:0097435">
    <property type="term" value="P:supramolecular fiber organization"/>
    <property type="evidence" value="ECO:0000315"/>
    <property type="project" value="RGD"/>
</dbReference>
<dbReference type="GO" id="GO:0033209">
    <property type="term" value="P:tumor necrosis factor-mediated signaling pathway"/>
    <property type="evidence" value="ECO:0000266"/>
    <property type="project" value="RGD"/>
</dbReference>
<dbReference type="CDD" id="cd14057">
    <property type="entry name" value="PK_ILK"/>
    <property type="match status" value="1"/>
</dbReference>
<dbReference type="FunFam" id="3.30.200.20:FF:000245">
    <property type="entry name" value="Integrin-linked protein kinase"/>
    <property type="match status" value="1"/>
</dbReference>
<dbReference type="FunFam" id="1.10.510.10:FF:000187">
    <property type="entry name" value="integrin-linked protein kinase"/>
    <property type="match status" value="1"/>
</dbReference>
<dbReference type="FunFam" id="1.25.40.20:FF:000050">
    <property type="entry name" value="integrin-linked protein kinase"/>
    <property type="match status" value="1"/>
</dbReference>
<dbReference type="Gene3D" id="1.25.40.20">
    <property type="entry name" value="Ankyrin repeat-containing domain"/>
    <property type="match status" value="1"/>
</dbReference>
<dbReference type="Gene3D" id="3.30.200.20">
    <property type="entry name" value="Phosphorylase Kinase, domain 1"/>
    <property type="match status" value="1"/>
</dbReference>
<dbReference type="Gene3D" id="1.10.510.10">
    <property type="entry name" value="Transferase(Phosphotransferase) domain 1"/>
    <property type="match status" value="1"/>
</dbReference>
<dbReference type="InterPro" id="IPR002110">
    <property type="entry name" value="Ankyrin_rpt"/>
</dbReference>
<dbReference type="InterPro" id="IPR036770">
    <property type="entry name" value="Ankyrin_rpt-contain_sf"/>
</dbReference>
<dbReference type="InterPro" id="IPR011009">
    <property type="entry name" value="Kinase-like_dom_sf"/>
</dbReference>
<dbReference type="InterPro" id="IPR035692">
    <property type="entry name" value="PK_ILK"/>
</dbReference>
<dbReference type="InterPro" id="IPR000719">
    <property type="entry name" value="Prot_kinase_dom"/>
</dbReference>
<dbReference type="InterPro" id="IPR001245">
    <property type="entry name" value="Ser-Thr/Tyr_kinase_cat_dom"/>
</dbReference>
<dbReference type="InterPro" id="IPR051681">
    <property type="entry name" value="Ser/Thr_Kinases-Pseudokinases"/>
</dbReference>
<dbReference type="PANTHER" id="PTHR44329:SF57">
    <property type="entry name" value="INTEGRIN-LINKED PROTEIN KINASE"/>
    <property type="match status" value="1"/>
</dbReference>
<dbReference type="PANTHER" id="PTHR44329">
    <property type="entry name" value="SERINE/THREONINE-PROTEIN KINASE TNNI3K-RELATED"/>
    <property type="match status" value="1"/>
</dbReference>
<dbReference type="Pfam" id="PF12796">
    <property type="entry name" value="Ank_2"/>
    <property type="match status" value="2"/>
</dbReference>
<dbReference type="Pfam" id="PF07714">
    <property type="entry name" value="PK_Tyr_Ser-Thr"/>
    <property type="match status" value="1"/>
</dbReference>
<dbReference type="PIRSF" id="PIRSF000654">
    <property type="entry name" value="Integrin-linked_kinase"/>
    <property type="match status" value="1"/>
</dbReference>
<dbReference type="SMART" id="SM00248">
    <property type="entry name" value="ANK"/>
    <property type="match status" value="3"/>
</dbReference>
<dbReference type="SUPFAM" id="SSF48403">
    <property type="entry name" value="Ankyrin repeat"/>
    <property type="match status" value="1"/>
</dbReference>
<dbReference type="SUPFAM" id="SSF56112">
    <property type="entry name" value="Protein kinase-like (PK-like)"/>
    <property type="match status" value="1"/>
</dbReference>
<dbReference type="PROSITE" id="PS50297">
    <property type="entry name" value="ANK_REP_REGION"/>
    <property type="match status" value="1"/>
</dbReference>
<dbReference type="PROSITE" id="PS50088">
    <property type="entry name" value="ANK_REPEAT"/>
    <property type="match status" value="3"/>
</dbReference>
<dbReference type="PROSITE" id="PS50011">
    <property type="entry name" value="PROTEIN_KINASE_DOM"/>
    <property type="match status" value="1"/>
</dbReference>
<protein>
    <recommendedName>
        <fullName evidence="5">Scaffold protein ILK</fullName>
    </recommendedName>
    <alternativeName>
        <fullName evidence="2">ILK-1</fullName>
    </alternativeName>
    <alternativeName>
        <fullName evidence="2">ILK-2</fullName>
    </alternativeName>
    <alternativeName>
        <fullName evidence="5">Inactive integrin-linked kinase</fullName>
    </alternativeName>
    <alternativeName>
        <fullName evidence="2">p59ILK</fullName>
    </alternativeName>
</protein>
<reference key="1">
    <citation type="journal article" date="2001" name="J. Biol. Chem.">
        <title>Integrin-linked kinase (ILK) binding to paxillin LD1 motif regulates ILK localization to focal adhesions.</title>
        <authorList>
            <person name="Nikolopoulos S.N."/>
            <person name="Turner C.E."/>
        </authorList>
    </citation>
    <scope>NUCLEOTIDE SEQUENCE [MRNA]</scope>
</reference>
<reference key="2">
    <citation type="journal article" date="2004" name="Genome Res.">
        <title>The status, quality, and expansion of the NIH full-length cDNA project: the Mammalian Gene Collection (MGC).</title>
        <authorList>
            <consortium name="The MGC Project Team"/>
        </authorList>
    </citation>
    <scope>NUCLEOTIDE SEQUENCE [LARGE SCALE MRNA]</scope>
    <source>
        <tissue>Prostate</tissue>
    </source>
</reference>
<reference key="3">
    <citation type="journal article" date="2009" name="Blood">
        <title>Integrin-linked kinase associated with integrin activation.</title>
        <authorList>
            <person name="Honda S."/>
            <person name="Shirotani-Ikejima H."/>
            <person name="Tadokoro S."/>
            <person name="Maeda Y."/>
            <person name="Kinoshita T."/>
            <person name="Tomiyama Y."/>
            <person name="Miyata T."/>
        </authorList>
    </citation>
    <scope>FUNCTION</scope>
</reference>
<sequence>MDDIFTQCREGNAVAVRLWLDNTENDLNQGDDHGFSPLHWACREGRSAVVEMLIMRGARINVMNRGDDTPLHLAASHGHRDIVQKLLQYKADINAVNEHGNVPLHYACFWGQDQVAEDLVANGALVSICNKYGEMPVDKAKAPLRELLRERAEKMGQNLNRIPYKDTFWKGTTRTRPRNGTLNKHSGIDFKQLNFLAKLNENHSGELWKGRWQGNDIVVKVLKVRDWSTRKSRDFNEECPRLRIFSHPNVLPVLGACQAPPAPHPTLITHWMPYGSLYNVLHEGTNFVVDQSQAVKFALDMARGMAFLHTLEPLIPRHALNSRSVMIDEDMTARISMADVKFSFQCPGRMYAPAWVAPEALQKKPEDTNRRSADMWSFAVLLWELVTREVPFADLSNMEIGMKVALEGLRPTIPPGISPHVCKLMKICMNEDPAKRPKFDMIVPILEKMQDK</sequence>
<accession>Q99J82</accession>
<name>ILK_RAT</name>
<keyword id="KW-0007">Acetylation</keyword>
<keyword id="KW-0040">ANK repeat</keyword>
<keyword id="KW-0067">ATP-binding</keyword>
<keyword id="KW-0965">Cell junction</keyword>
<keyword id="KW-1003">Cell membrane</keyword>
<keyword id="KW-0966">Cell projection</keyword>
<keyword id="KW-0963">Cytoplasm</keyword>
<keyword id="KW-0206">Cytoskeleton</keyword>
<keyword id="KW-0460">Magnesium</keyword>
<keyword id="KW-0472">Membrane</keyword>
<keyword id="KW-0479">Metal-binding</keyword>
<keyword id="KW-0547">Nucleotide-binding</keyword>
<keyword id="KW-0539">Nucleus</keyword>
<keyword id="KW-0597">Phosphoprotein</keyword>
<keyword id="KW-1185">Reference proteome</keyword>
<keyword id="KW-0677">Repeat</keyword>
<organism>
    <name type="scientific">Rattus norvegicus</name>
    <name type="common">Rat</name>
    <dbReference type="NCBI Taxonomy" id="10116"/>
    <lineage>
        <taxon>Eukaryota</taxon>
        <taxon>Metazoa</taxon>
        <taxon>Chordata</taxon>
        <taxon>Craniata</taxon>
        <taxon>Vertebrata</taxon>
        <taxon>Euteleostomi</taxon>
        <taxon>Mammalia</taxon>
        <taxon>Eutheria</taxon>
        <taxon>Euarchontoglires</taxon>
        <taxon>Glires</taxon>
        <taxon>Rodentia</taxon>
        <taxon>Myomorpha</taxon>
        <taxon>Muroidea</taxon>
        <taxon>Muridae</taxon>
        <taxon>Murinae</taxon>
        <taxon>Rattus</taxon>
    </lineage>
</organism>
<evidence type="ECO:0000250" key="1">
    <source>
        <dbReference type="UniProtKB" id="O55222"/>
    </source>
</evidence>
<evidence type="ECO:0000250" key="2">
    <source>
        <dbReference type="UniProtKB" id="Q13418"/>
    </source>
</evidence>
<evidence type="ECO:0000255" key="3">
    <source>
        <dbReference type="PROSITE-ProRule" id="PRU00159"/>
    </source>
</evidence>
<evidence type="ECO:0000269" key="4">
    <source>
    </source>
</evidence>
<evidence type="ECO:0000305" key="5"/>
<evidence type="ECO:0000312" key="6">
    <source>
        <dbReference type="RGD" id="620063"/>
    </source>
</evidence>
<gene>
    <name evidence="6" type="primary">Ilk</name>
    <name evidence="2" type="synonym">ILK1</name>
    <name evidence="2" type="synonym">ILK2</name>
</gene>
<proteinExistence type="evidence at transcript level"/>
<comment type="function">
    <text evidence="1 2 4">Scaffold protein which mediates protein-protein interactions during a range of cellular events including focal adhesion assembly, cell adhesion and cell migration (By similarity). Regulates integrin-mediated signal transduction by contributing to inside-out integrin activation (PubMed:19299337). Recruits PARVA and LIMS1/PITCH to form the heterotrimeric IPP (ILK-PINCH-PARVIN) complex which binds to F-actin via the C-terminal tail of LIMS1 and the N-terminal region of PARVA, promoting F-actin filament bundling, a process required to generate force for actin cytoskeleton reorganization and subsequent dynamic cell adhesion events such as cell spreading and migration (By similarity). Binding to PARVA promotes effective assembly of ILK into focal adhesions while PARVA-bound ILK can simultaneously engage integrin-beta cytoplasmic tails to mediate cell adhesion (By similarity). Plays a role with PARVG in promoting the cell adhesion and spreading of leukocytes. Acts as an upstream effector of both AKT1/PKB and GSK3 (By similarity). Mediates trafficking of caveolae to the cell surface in an ITGB1-dependent manner by promoting the recruitment of IQGAP1 to the cell cortex which cooperates with its effector DIAPH1 to locally stabilize microtubules and allow stable insertion of caveolae into the plasma membrane (By similarity). Required for the maintenance of mitotic spindle integrity by promoting phosphorylation of TACC3 by AURKA (By similarity). Associates with chromatin and may act as a negative regulator of transcription when located in the nucleus (By similarity).</text>
</comment>
<comment type="subunit">
    <text evidence="1 2">Component of the heterotrimeric IPP (ILK-PINCH-PARVIN) complex composed of ILK, LIMS1/PINCH and PARVA; the complex binds to F-actin via the C-terminal tail of LIMS1 and the N-terminal region of PARVA, promoting F-actin filament bundling. Formation of the IPP complex is dependent on protein kinase C and precedes integrin-mediated cell adhesion and spreading. ILK also interacts with LIMS2/PINCH2 and with PARVB and PARVG which may substitute for LIMS1 and PARVA in the IPP complex; PARVA and PARVB compete for the same binding site. Interaction with PARVG promotes the establishment of cell polarity required for leukocyte migration. Interacts with the cytoplasmic domain of integrin ITGB1 and may also interact with integrins ITGB2, ITGB3 and/or ITGB5. Interacts probably also with TGFB1I1. Interacts (via ANK repeats) with EPHA1 (via SAM domain); stimulated by EFNA1 but independent of the kinase activity of EPHA1. Interacts with FERMT2. Interacts with LIMD2; leading to activate the protein kinase activity. Interacts with PXN/PAXILLIN (via LD motif 4). Interacts with CCDC25 (via cytoplasmic region); initiating the ILK-PARVB cascade to induce cytoskeleton rearrangement and directional migration of cells. Interacts with IQGAP1; the interaction is required for localization of IQGAP1 to the cell cortex.</text>
</comment>
<comment type="subcellular location">
    <subcellularLocation>
        <location evidence="2">Cell junction</location>
        <location evidence="2">Focal adhesion</location>
    </subcellularLocation>
    <subcellularLocation>
        <location evidence="2">Cell membrane</location>
        <topology evidence="2">Peripheral membrane protein</topology>
        <orientation evidence="2">Cytoplasmic side</orientation>
    </subcellularLocation>
    <subcellularLocation>
        <location evidence="1">Cell projection</location>
        <location evidence="1">Lamellipodium</location>
    </subcellularLocation>
    <subcellularLocation>
        <location evidence="2">Cytoplasm</location>
        <location evidence="2">Myofibril</location>
        <location evidence="2">Sarcomere</location>
    </subcellularLocation>
    <subcellularLocation>
        <location evidence="2">Cytoplasm</location>
    </subcellularLocation>
    <subcellularLocation>
        <location evidence="2">Nucleus</location>
    </subcellularLocation>
    <subcellularLocation>
        <location evidence="2">Cytoplasm</location>
        <location evidence="2">Cytoskeleton</location>
        <location evidence="2">Microtubule organizing center</location>
        <location evidence="2">Centrosome</location>
    </subcellularLocation>
    <subcellularLocation>
        <location evidence="2">Cytoplasm</location>
        <location evidence="2">Cell cortex</location>
    </subcellularLocation>
</comment>
<comment type="domain">
    <text evidence="2">The kinase domain is likely to have lost catalytic activity but retains ATP-binding activity. ATP structurally stabilizes the kinase domain and promotes stability of binding to PARVA as well as focal adhesion stability.</text>
</comment>
<comment type="domain">
    <text evidence="2">The PH-like region is not required for assembly of the IPP complex or for localization of ILK to focal adhesions.</text>
</comment>
<comment type="PTM">
    <text evidence="2">Phosphorylation by PAK1 modulates ILK subcellular location by promoting its nuclear export.</text>
</comment>
<comment type="similarity">
    <text evidence="5">Belongs to the protein kinase superfamily. TKL Ser/Thr protein kinase family.</text>
</comment>
<comment type="caution">
    <text evidence="2">Was originally thought to act as a serine/threonine-protein kinase. Now thought to be a pseudokinase which does not have kinase activity and which functions solely as a scaffold protein.</text>
</comment>